<name>PDZD4_MOUSE</name>
<protein>
    <recommendedName>
        <fullName>PDZ domain-containing protein 4</fullName>
    </recommendedName>
    <alternativeName>
        <fullName>PDZ domain-containing RING finger protein 4-like protein</fullName>
    </alternativeName>
</protein>
<sequence length="772" mass="86819">MGCNMCVVQKPEEQYKVMLQVNGKELSKLSQEQTLEALRASKEPLVIQVLRRSPRLRGDSSCHDLQLVDSGTQTDITFEHIMALGKLRPPTPPMGILEPYVLSELPPISHEYYDPAEFMEGGPQEAERMDELEYEEVELCKNSHQDKLGLMVCYRTDEEEDLGIYVGEVNPNSIAAKDGRIREGDRIIQINGMDVQNREEAVAILSQEENTNISLLVARPESQLAKRWKDSDRDDFLDDFGSENEGDLRARKLKSPPVQQIGNDEKGAPDGGPGLNNSQDLDSGVGRTDESTRNEESSEHDLLGDEPPSTTNTPGSLRKFGLQGDALQSRDFHFSMDSLLAEGAGLGGADLPGLTDEEYERYRELLEIKCHLENGNQLGIFFSRASSGNSALDVNRNESLGHEMAMLEEELRHLEFKCRNILRAQKMQQLRERCMKAWLLEEESLYDLAASEPKKHELSDISELPEKSDKDSTSAYNTGESCRSTPLLVEPLPESPLKRSGAGNSNLNRTPSGPPVTTHLKGAPSPGSPAKFRSLSRDPEVGRRQHTEERVRRSTKTSVTLERVGPEGSPYLSRRHRGQEIEQYHSCVQLAPPRTLEDLGHGSLSLASGPRVGGVAAAAVEAPRMEWKVKVRSDGTRYVAKRPVRDRLLKARALKIREERSGMTTDDDAVSEMKMGRYWSKEERKQHLIRAREQRKRREFMMQSRLECLREQQNGDSKPELNIIALSHRKTMKKRNKKILDNWITIQEMLAHGARSADGKRIYNPLLSVTTV</sequence>
<gene>
    <name type="primary">Pdzd4</name>
    <name type="synonym">Pdzk4</name>
    <name type="synonym">Pdzrn4l</name>
    <name type="synonym">Xlu</name>
</gene>
<reference key="1">
    <citation type="submission" date="1999-03" db="EMBL/GenBank/DDBJ databases">
        <authorList>
            <person name="Platzer M."/>
            <person name="Brenner V."/>
            <person name="Reichwald K."/>
            <person name="Wiehe T."/>
            <person name="Oksche A."/>
            <person name="Rosenthal A."/>
        </authorList>
    </citation>
    <scope>NUCLEOTIDE SEQUENCE [LARGE SCALE GENOMIC DNA]</scope>
</reference>
<reference key="2">
    <citation type="journal article" date="2009" name="PLoS Biol.">
        <title>Lineage-specific biology revealed by a finished genome assembly of the mouse.</title>
        <authorList>
            <person name="Church D.M."/>
            <person name="Goodstadt L."/>
            <person name="Hillier L.W."/>
            <person name="Zody M.C."/>
            <person name="Goldstein S."/>
            <person name="She X."/>
            <person name="Bult C.J."/>
            <person name="Agarwala R."/>
            <person name="Cherry J.L."/>
            <person name="DiCuccio M."/>
            <person name="Hlavina W."/>
            <person name="Kapustin Y."/>
            <person name="Meric P."/>
            <person name="Maglott D."/>
            <person name="Birtle Z."/>
            <person name="Marques A.C."/>
            <person name="Graves T."/>
            <person name="Zhou S."/>
            <person name="Teague B."/>
            <person name="Potamousis K."/>
            <person name="Churas C."/>
            <person name="Place M."/>
            <person name="Herschleb J."/>
            <person name="Runnheim R."/>
            <person name="Forrest D."/>
            <person name="Amos-Landgraf J."/>
            <person name="Schwartz D.C."/>
            <person name="Cheng Z."/>
            <person name="Lindblad-Toh K."/>
            <person name="Eichler E.E."/>
            <person name="Ponting C.P."/>
        </authorList>
    </citation>
    <scope>NUCLEOTIDE SEQUENCE [LARGE SCALE GENOMIC DNA]</scope>
    <source>
        <strain>C57BL/6J</strain>
    </source>
</reference>
<reference key="3">
    <citation type="journal article" date="2004" name="Genome Res.">
        <title>The status, quality, and expansion of the NIH full-length cDNA project: the Mammalian Gene Collection (MGC).</title>
        <authorList>
            <consortium name="The MGC Project Team"/>
        </authorList>
    </citation>
    <scope>NUCLEOTIDE SEQUENCE [LARGE SCALE MRNA] OF 10-772</scope>
    <source>
        <strain>C57BL/6J</strain>
        <tissue>Brain</tissue>
    </source>
</reference>
<keyword id="KW-0175">Coiled coil</keyword>
<keyword id="KW-0963">Cytoplasm</keyword>
<keyword id="KW-0597">Phosphoprotein</keyword>
<keyword id="KW-1185">Reference proteome</keyword>
<proteinExistence type="evidence at transcript level"/>
<evidence type="ECO:0000250" key="1"/>
<evidence type="ECO:0000250" key="2">
    <source>
        <dbReference type="UniProtKB" id="Q76G19"/>
    </source>
</evidence>
<evidence type="ECO:0000255" key="3"/>
<evidence type="ECO:0000255" key="4">
    <source>
        <dbReference type="PROSITE-ProRule" id="PRU00143"/>
    </source>
</evidence>
<evidence type="ECO:0000256" key="5">
    <source>
        <dbReference type="SAM" id="MobiDB-lite"/>
    </source>
</evidence>
<evidence type="ECO:0000305" key="6"/>
<dbReference type="EMBL" id="AF133093">
    <property type="status" value="NOT_ANNOTATED_CDS"/>
    <property type="molecule type" value="Genomic_DNA"/>
</dbReference>
<dbReference type="EMBL" id="AL672094">
    <property type="status" value="NOT_ANNOTATED_CDS"/>
    <property type="molecule type" value="Genomic_DNA"/>
</dbReference>
<dbReference type="EMBL" id="BC056462">
    <property type="protein sequence ID" value="AAH56462.1"/>
    <property type="status" value="ALT_INIT"/>
    <property type="molecule type" value="mRNA"/>
</dbReference>
<dbReference type="CCDS" id="CCDS30214.1"/>
<dbReference type="RefSeq" id="NP_001025039.1">
    <property type="nucleotide sequence ID" value="NM_001029868.2"/>
</dbReference>
<dbReference type="RefSeq" id="NP_001277469.1">
    <property type="nucleotide sequence ID" value="NM_001290540.1"/>
</dbReference>
<dbReference type="SMR" id="Q9QY39"/>
<dbReference type="FunCoup" id="Q9QY39">
    <property type="interactions" value="274"/>
</dbReference>
<dbReference type="STRING" id="10090.ENSMUSP00000002080"/>
<dbReference type="iPTMnet" id="Q9QY39"/>
<dbReference type="PhosphoSitePlus" id="Q9QY39"/>
<dbReference type="jPOST" id="Q9QY39"/>
<dbReference type="PaxDb" id="10090-ENSMUSP00000002080"/>
<dbReference type="ProteomicsDB" id="301782"/>
<dbReference type="Antibodypedia" id="578">
    <property type="antibodies" value="114 antibodies from 18 providers"/>
</dbReference>
<dbReference type="DNASU" id="245469"/>
<dbReference type="Ensembl" id="ENSMUST00000002080.12">
    <property type="protein sequence ID" value="ENSMUSP00000002080.6"/>
    <property type="gene ID" value="ENSMUSG00000002006.13"/>
</dbReference>
<dbReference type="GeneID" id="245469"/>
<dbReference type="KEGG" id="mmu:245469"/>
<dbReference type="UCSC" id="uc009tmt.1">
    <property type="organism name" value="mouse"/>
</dbReference>
<dbReference type="AGR" id="MGI:2443483"/>
<dbReference type="CTD" id="57595"/>
<dbReference type="MGI" id="MGI:2443483">
    <property type="gene designation" value="Pdzd4"/>
</dbReference>
<dbReference type="VEuPathDB" id="HostDB:ENSMUSG00000002006"/>
<dbReference type="eggNOG" id="KOG0312">
    <property type="taxonomic scope" value="Eukaryota"/>
</dbReference>
<dbReference type="GeneTree" id="ENSGT00950000183062"/>
<dbReference type="HOGENOM" id="CLU_011096_1_0_1"/>
<dbReference type="InParanoid" id="Q9QY39"/>
<dbReference type="OMA" id="EFMEGSP"/>
<dbReference type="OrthoDB" id="123971at2759"/>
<dbReference type="PhylomeDB" id="Q9QY39"/>
<dbReference type="TreeFam" id="TF315909"/>
<dbReference type="BioGRID-ORCS" id="245469">
    <property type="hits" value="2 hits in 76 CRISPR screens"/>
</dbReference>
<dbReference type="PRO" id="PR:Q9QY39"/>
<dbReference type="Proteomes" id="UP000000589">
    <property type="component" value="Chromosome X"/>
</dbReference>
<dbReference type="RNAct" id="Q9QY39">
    <property type="molecule type" value="protein"/>
</dbReference>
<dbReference type="Bgee" id="ENSMUSG00000002006">
    <property type="expression patterns" value="Expressed in cortical plate and 171 other cell types or tissues"/>
</dbReference>
<dbReference type="ExpressionAtlas" id="Q9QY39">
    <property type="expression patterns" value="baseline and differential"/>
</dbReference>
<dbReference type="GO" id="GO:0005938">
    <property type="term" value="C:cell cortex"/>
    <property type="evidence" value="ECO:0007669"/>
    <property type="project" value="UniProtKB-SubCell"/>
</dbReference>
<dbReference type="CDD" id="cd06716">
    <property type="entry name" value="PDZ2-PDZRN4-like"/>
    <property type="match status" value="1"/>
</dbReference>
<dbReference type="FunFam" id="2.30.42.10:FF:000028">
    <property type="entry name" value="PDZ domain containing ring finger 4"/>
    <property type="match status" value="1"/>
</dbReference>
<dbReference type="Gene3D" id="2.30.42.10">
    <property type="match status" value="1"/>
</dbReference>
<dbReference type="InterPro" id="IPR051971">
    <property type="entry name" value="E3_ubiquitin-PDZ_ligase"/>
</dbReference>
<dbReference type="InterPro" id="IPR001478">
    <property type="entry name" value="PDZ"/>
</dbReference>
<dbReference type="InterPro" id="IPR036034">
    <property type="entry name" value="PDZ_sf"/>
</dbReference>
<dbReference type="PANTHER" id="PTHR15545">
    <property type="entry name" value="PDZ DOMAIN CONTAINING RING FINGER PROTEIN 3, 4"/>
    <property type="match status" value="1"/>
</dbReference>
<dbReference type="PANTHER" id="PTHR15545:SF4">
    <property type="entry name" value="PDZ DOMAIN-CONTAINING PROTEIN 4"/>
    <property type="match status" value="1"/>
</dbReference>
<dbReference type="Pfam" id="PF00595">
    <property type="entry name" value="PDZ"/>
    <property type="match status" value="1"/>
</dbReference>
<dbReference type="SMART" id="SM00228">
    <property type="entry name" value="PDZ"/>
    <property type="match status" value="1"/>
</dbReference>
<dbReference type="SUPFAM" id="SSF50156">
    <property type="entry name" value="PDZ domain-like"/>
    <property type="match status" value="1"/>
</dbReference>
<dbReference type="PROSITE" id="PS50106">
    <property type="entry name" value="PDZ"/>
    <property type="match status" value="1"/>
</dbReference>
<feature type="chain" id="PRO_0000055922" description="PDZ domain-containing protein 4">
    <location>
        <begin position="1"/>
        <end position="772"/>
    </location>
</feature>
<feature type="domain" description="PDZ" evidence="4">
    <location>
        <begin position="136"/>
        <end position="221"/>
    </location>
</feature>
<feature type="region of interest" description="Disordered" evidence="5">
    <location>
        <begin position="239"/>
        <end position="320"/>
    </location>
</feature>
<feature type="region of interest" description="Disordered" evidence="5">
    <location>
        <begin position="450"/>
        <end position="573"/>
    </location>
</feature>
<feature type="coiled-coil region" evidence="3">
    <location>
        <begin position="394"/>
        <end position="424"/>
    </location>
</feature>
<feature type="compositionally biased region" description="Basic and acidic residues" evidence="5">
    <location>
        <begin position="287"/>
        <end position="303"/>
    </location>
</feature>
<feature type="compositionally biased region" description="Basic and acidic residues" evidence="5">
    <location>
        <begin position="452"/>
        <end position="472"/>
    </location>
</feature>
<feature type="compositionally biased region" description="Polar residues" evidence="5">
    <location>
        <begin position="473"/>
        <end position="484"/>
    </location>
</feature>
<feature type="compositionally biased region" description="Polar residues" evidence="5">
    <location>
        <begin position="502"/>
        <end position="511"/>
    </location>
</feature>
<feature type="compositionally biased region" description="Basic and acidic residues" evidence="5">
    <location>
        <begin position="535"/>
        <end position="552"/>
    </location>
</feature>
<feature type="modified residue" description="Phosphoserine" evidence="2">
    <location>
        <position position="242"/>
    </location>
</feature>
<feature type="modified residue" description="Phosphoserine" evidence="2">
    <location>
        <position position="459"/>
    </location>
</feature>
<accession>Q9QY39</accession>
<accession>A2AFG4</accession>
<accession>Q6PHP2</accession>
<comment type="subcellular location">
    <subcellularLocation>
        <location evidence="1">Cytoplasm</location>
        <location evidence="1">Cell cortex</location>
    </subcellularLocation>
    <text evidence="1">Mainly localized under the plasma membrane.</text>
</comment>
<comment type="sequence caution" evidence="6">
    <conflict type="erroneous initiation">
        <sequence resource="EMBL-CDS" id="AAH56462"/>
    </conflict>
</comment>
<organism>
    <name type="scientific">Mus musculus</name>
    <name type="common">Mouse</name>
    <dbReference type="NCBI Taxonomy" id="10090"/>
    <lineage>
        <taxon>Eukaryota</taxon>
        <taxon>Metazoa</taxon>
        <taxon>Chordata</taxon>
        <taxon>Craniata</taxon>
        <taxon>Vertebrata</taxon>
        <taxon>Euteleostomi</taxon>
        <taxon>Mammalia</taxon>
        <taxon>Eutheria</taxon>
        <taxon>Euarchontoglires</taxon>
        <taxon>Glires</taxon>
        <taxon>Rodentia</taxon>
        <taxon>Myomorpha</taxon>
        <taxon>Muroidea</taxon>
        <taxon>Muridae</taxon>
        <taxon>Murinae</taxon>
        <taxon>Mus</taxon>
        <taxon>Mus</taxon>
    </lineage>
</organism>